<proteinExistence type="evidence at protein level"/>
<reference key="1">
    <citation type="journal article" date="2004" name="Nature">
        <title>Genome sequence of the Brown Norway rat yields insights into mammalian evolution.</title>
        <authorList>
            <person name="Gibbs R.A."/>
            <person name="Weinstock G.M."/>
            <person name="Metzker M.L."/>
            <person name="Muzny D.M."/>
            <person name="Sodergren E.J."/>
            <person name="Scherer S."/>
            <person name="Scott G."/>
            <person name="Steffen D."/>
            <person name="Worley K.C."/>
            <person name="Burch P.E."/>
            <person name="Okwuonu G."/>
            <person name="Hines S."/>
            <person name="Lewis L."/>
            <person name="Deramo C."/>
            <person name="Delgado O."/>
            <person name="Dugan-Rocha S."/>
            <person name="Miner G."/>
            <person name="Morgan M."/>
            <person name="Hawes A."/>
            <person name="Gill R."/>
            <person name="Holt R.A."/>
            <person name="Adams M.D."/>
            <person name="Amanatides P.G."/>
            <person name="Baden-Tillson H."/>
            <person name="Barnstead M."/>
            <person name="Chin S."/>
            <person name="Evans C.A."/>
            <person name="Ferriera S."/>
            <person name="Fosler C."/>
            <person name="Glodek A."/>
            <person name="Gu Z."/>
            <person name="Jennings D."/>
            <person name="Kraft C.L."/>
            <person name="Nguyen T."/>
            <person name="Pfannkoch C.M."/>
            <person name="Sitter C."/>
            <person name="Sutton G.G."/>
            <person name="Venter J.C."/>
            <person name="Woodage T."/>
            <person name="Smith D."/>
            <person name="Lee H.-M."/>
            <person name="Gustafson E."/>
            <person name="Cahill P."/>
            <person name="Kana A."/>
            <person name="Doucette-Stamm L."/>
            <person name="Weinstock K."/>
            <person name="Fechtel K."/>
            <person name="Weiss R.B."/>
            <person name="Dunn D.M."/>
            <person name="Green E.D."/>
            <person name="Blakesley R.W."/>
            <person name="Bouffard G.G."/>
            <person name="De Jong P.J."/>
            <person name="Osoegawa K."/>
            <person name="Zhu B."/>
            <person name="Marra M."/>
            <person name="Schein J."/>
            <person name="Bosdet I."/>
            <person name="Fjell C."/>
            <person name="Jones S."/>
            <person name="Krzywinski M."/>
            <person name="Mathewson C."/>
            <person name="Siddiqui A."/>
            <person name="Wye N."/>
            <person name="McPherson J."/>
            <person name="Zhao S."/>
            <person name="Fraser C.M."/>
            <person name="Shetty J."/>
            <person name="Shatsman S."/>
            <person name="Geer K."/>
            <person name="Chen Y."/>
            <person name="Abramzon S."/>
            <person name="Nierman W.C."/>
            <person name="Havlak P.H."/>
            <person name="Chen R."/>
            <person name="Durbin K.J."/>
            <person name="Egan A."/>
            <person name="Ren Y."/>
            <person name="Song X.-Z."/>
            <person name="Li B."/>
            <person name="Liu Y."/>
            <person name="Qin X."/>
            <person name="Cawley S."/>
            <person name="Cooney A.J."/>
            <person name="D'Souza L.M."/>
            <person name="Martin K."/>
            <person name="Wu J.Q."/>
            <person name="Gonzalez-Garay M.L."/>
            <person name="Jackson A.R."/>
            <person name="Kalafus K.J."/>
            <person name="McLeod M.P."/>
            <person name="Milosavljevic A."/>
            <person name="Virk D."/>
            <person name="Volkov A."/>
            <person name="Wheeler D.A."/>
            <person name="Zhang Z."/>
            <person name="Bailey J.A."/>
            <person name="Eichler E.E."/>
            <person name="Tuzun E."/>
            <person name="Birney E."/>
            <person name="Mongin E."/>
            <person name="Ureta-Vidal A."/>
            <person name="Woodwark C."/>
            <person name="Zdobnov E."/>
            <person name="Bork P."/>
            <person name="Suyama M."/>
            <person name="Torrents D."/>
            <person name="Alexandersson M."/>
            <person name="Trask B.J."/>
            <person name="Young J.M."/>
            <person name="Huang H."/>
            <person name="Wang H."/>
            <person name="Xing H."/>
            <person name="Daniels S."/>
            <person name="Gietzen D."/>
            <person name="Schmidt J."/>
            <person name="Stevens K."/>
            <person name="Vitt U."/>
            <person name="Wingrove J."/>
            <person name="Camara F."/>
            <person name="Mar Alba M."/>
            <person name="Abril J.F."/>
            <person name="Guigo R."/>
            <person name="Smit A."/>
            <person name="Dubchak I."/>
            <person name="Rubin E.M."/>
            <person name="Couronne O."/>
            <person name="Poliakov A."/>
            <person name="Huebner N."/>
            <person name="Ganten D."/>
            <person name="Goesele C."/>
            <person name="Hummel O."/>
            <person name="Kreitler T."/>
            <person name="Lee Y.-A."/>
            <person name="Monti J."/>
            <person name="Schulz H."/>
            <person name="Zimdahl H."/>
            <person name="Himmelbauer H."/>
            <person name="Lehrach H."/>
            <person name="Jacob H.J."/>
            <person name="Bromberg S."/>
            <person name="Gullings-Handley J."/>
            <person name="Jensen-Seaman M.I."/>
            <person name="Kwitek A.E."/>
            <person name="Lazar J."/>
            <person name="Pasko D."/>
            <person name="Tonellato P.J."/>
            <person name="Twigger S."/>
            <person name="Ponting C.P."/>
            <person name="Duarte J.M."/>
            <person name="Rice S."/>
            <person name="Goodstadt L."/>
            <person name="Beatson S.A."/>
            <person name="Emes R.D."/>
            <person name="Winter E.E."/>
            <person name="Webber C."/>
            <person name="Brandt P."/>
            <person name="Nyakatura G."/>
            <person name="Adetobi M."/>
            <person name="Chiaromonte F."/>
            <person name="Elnitski L."/>
            <person name="Eswara P."/>
            <person name="Hardison R.C."/>
            <person name="Hou M."/>
            <person name="Kolbe D."/>
            <person name="Makova K."/>
            <person name="Miller W."/>
            <person name="Nekrutenko A."/>
            <person name="Riemer C."/>
            <person name="Schwartz S."/>
            <person name="Taylor J."/>
            <person name="Yang S."/>
            <person name="Zhang Y."/>
            <person name="Lindpaintner K."/>
            <person name="Andrews T.D."/>
            <person name="Caccamo M."/>
            <person name="Clamp M."/>
            <person name="Clarke L."/>
            <person name="Curwen V."/>
            <person name="Durbin R.M."/>
            <person name="Eyras E."/>
            <person name="Searle S.M."/>
            <person name="Cooper G.M."/>
            <person name="Batzoglou S."/>
            <person name="Brudno M."/>
            <person name="Sidow A."/>
            <person name="Stone E.A."/>
            <person name="Payseur B.A."/>
            <person name="Bourque G."/>
            <person name="Lopez-Otin C."/>
            <person name="Puente X.S."/>
            <person name="Chakrabarti K."/>
            <person name="Chatterji S."/>
            <person name="Dewey C."/>
            <person name="Pachter L."/>
            <person name="Bray N."/>
            <person name="Yap V.B."/>
            <person name="Caspi A."/>
            <person name="Tesler G."/>
            <person name="Pevzner P.A."/>
            <person name="Haussler D."/>
            <person name="Roskin K.M."/>
            <person name="Baertsch R."/>
            <person name="Clawson H."/>
            <person name="Furey T.S."/>
            <person name="Hinrichs A.S."/>
            <person name="Karolchik D."/>
            <person name="Kent W.J."/>
            <person name="Rosenbloom K.R."/>
            <person name="Trumbower H."/>
            <person name="Weirauch M."/>
            <person name="Cooper D.N."/>
            <person name="Stenson P.D."/>
            <person name="Ma B."/>
            <person name="Brent M."/>
            <person name="Arumugam M."/>
            <person name="Shteynberg D."/>
            <person name="Copley R.R."/>
            <person name="Taylor M.S."/>
            <person name="Riethman H."/>
            <person name="Mudunuri U."/>
            <person name="Peterson J."/>
            <person name="Guyer M."/>
            <person name="Felsenfeld A."/>
            <person name="Old S."/>
            <person name="Mockrin S."/>
            <person name="Collins F.S."/>
        </authorList>
    </citation>
    <scope>NUCLEOTIDE SEQUENCE [LARGE SCALE GENOMIC DNA]</scope>
    <source>
        <strain>Brown Norway</strain>
    </source>
</reference>
<reference key="2">
    <citation type="submission" date="2005-07" db="EMBL/GenBank/DDBJ databases">
        <authorList>
            <person name="Mural R.J."/>
            <person name="Adams M.D."/>
            <person name="Myers E.W."/>
            <person name="Smith H.O."/>
            <person name="Venter J.C."/>
        </authorList>
    </citation>
    <scope>NUCLEOTIDE SEQUENCE [LARGE SCALE GENOMIC DNA]</scope>
</reference>
<reference key="3">
    <citation type="journal article" date="2012" name="Nat. Commun.">
        <title>Quantitative maps of protein phosphorylation sites across 14 different rat organs and tissues.</title>
        <authorList>
            <person name="Lundby A."/>
            <person name="Secher A."/>
            <person name="Lage K."/>
            <person name="Nordsborg N.B."/>
            <person name="Dmytriyev A."/>
            <person name="Lundby C."/>
            <person name="Olsen J.V."/>
        </authorList>
    </citation>
    <scope>IDENTIFICATION BY MASS SPECTROMETRY [LARGE SCALE ANALYSIS]</scope>
</reference>
<reference key="4">
    <citation type="journal article" date="2012" name="Neurochem. Int.">
        <title>Upregulation of the heteromeric y(+)LAT2 transporter contributes to ammonia-induced increase of arginine uptake in rat cerebral cortical astrocytes.</title>
        <authorList>
            <person name="Zielinska M."/>
            <person name="Skowronska M."/>
            <person name="Fresko I."/>
            <person name="Albrecht J."/>
        </authorList>
    </citation>
    <scope>FUNCTION</scope>
    <scope>BIOPHYSICOCHEMICAL PROPERTIES</scope>
    <scope>TISSUE SPECIFICITY</scope>
    <scope>INDUCTION</scope>
</reference>
<reference key="5">
    <citation type="journal article" date="2015" name="J. Neurochem.">
        <title>Induction of inducible nitric oxide synthase expression in ammonia-exposed cultured astrocytes is coupled to increased arginine transport by upregulated y(+)LAT2 transporter.</title>
        <authorList>
            <person name="Zielinska M."/>
            <person name="Milewski K."/>
            <person name="Skowronska M."/>
            <person name="Gajos A."/>
            <person name="Zieminska E."/>
            <person name="Beresewicz A."/>
            <person name="Albrecht J."/>
        </authorList>
    </citation>
    <scope>FUNCTION</scope>
</reference>
<organism>
    <name type="scientific">Rattus norvegicus</name>
    <name type="common">Rat</name>
    <dbReference type="NCBI Taxonomy" id="10116"/>
    <lineage>
        <taxon>Eukaryota</taxon>
        <taxon>Metazoa</taxon>
        <taxon>Chordata</taxon>
        <taxon>Craniata</taxon>
        <taxon>Vertebrata</taxon>
        <taxon>Euteleostomi</taxon>
        <taxon>Mammalia</taxon>
        <taxon>Eutheria</taxon>
        <taxon>Euarchontoglires</taxon>
        <taxon>Glires</taxon>
        <taxon>Rodentia</taxon>
        <taxon>Myomorpha</taxon>
        <taxon>Muroidea</taxon>
        <taxon>Muridae</taxon>
        <taxon>Murinae</taxon>
        <taxon>Rattus</taxon>
    </lineage>
</organism>
<dbReference type="EMBL" id="CH473972">
    <property type="protein sequence ID" value="EDL92441.1"/>
    <property type="molecule type" value="Genomic_DNA"/>
</dbReference>
<dbReference type="RefSeq" id="NP_001100894.1">
    <property type="nucleotide sequence ID" value="NM_001107424.1"/>
</dbReference>
<dbReference type="RefSeq" id="XP_006255561.1">
    <property type="nucleotide sequence ID" value="XM_006255499.3"/>
</dbReference>
<dbReference type="RefSeq" id="XP_006255562.1">
    <property type="nucleotide sequence ID" value="XM_006255500.5"/>
</dbReference>
<dbReference type="RefSeq" id="XP_008770722.1">
    <property type="nucleotide sequence ID" value="XM_008772500.4"/>
</dbReference>
<dbReference type="RefSeq" id="XP_008770723.1">
    <property type="nucleotide sequence ID" value="XM_008772501.4"/>
</dbReference>
<dbReference type="RefSeq" id="XP_008770724.1">
    <property type="nucleotide sequence ID" value="XM_008772502.3"/>
</dbReference>
<dbReference type="RefSeq" id="XP_038953672.1">
    <property type="nucleotide sequence ID" value="XM_039097744.2"/>
</dbReference>
<dbReference type="SMR" id="D3ZMM8"/>
<dbReference type="FunCoup" id="D3ZMM8">
    <property type="interactions" value="1691"/>
</dbReference>
<dbReference type="STRING" id="10116.ENSRNOP00000027117"/>
<dbReference type="iPTMnet" id="D3ZMM8"/>
<dbReference type="PhosphoSitePlus" id="D3ZMM8"/>
<dbReference type="PaxDb" id="10116-ENSRNOP00000027117"/>
<dbReference type="PeptideAtlas" id="D3ZMM8"/>
<dbReference type="Ensembl" id="ENSRNOT00000027117.5">
    <property type="protein sequence ID" value="ENSRNOP00000027117.3"/>
    <property type="gene ID" value="ENSRNOG00000019943.6"/>
</dbReference>
<dbReference type="GeneID" id="307811"/>
<dbReference type="KEGG" id="rno:307811"/>
<dbReference type="UCSC" id="RGD:1309193">
    <property type="organism name" value="rat"/>
</dbReference>
<dbReference type="AGR" id="RGD:1309193"/>
<dbReference type="CTD" id="9057"/>
<dbReference type="RGD" id="1309193">
    <property type="gene designation" value="Slc7a6"/>
</dbReference>
<dbReference type="eggNOG" id="KOG1287">
    <property type="taxonomic scope" value="Eukaryota"/>
</dbReference>
<dbReference type="GeneTree" id="ENSGT00940000158295"/>
<dbReference type="HOGENOM" id="CLU_007946_3_0_1"/>
<dbReference type="InParanoid" id="D3ZMM8"/>
<dbReference type="OMA" id="ISGMYFG"/>
<dbReference type="OrthoDB" id="10062876at2759"/>
<dbReference type="TreeFam" id="TF313355"/>
<dbReference type="PRO" id="PR:D3ZMM8"/>
<dbReference type="Proteomes" id="UP000002494">
    <property type="component" value="Chromosome 19"/>
</dbReference>
<dbReference type="Proteomes" id="UP000234681">
    <property type="component" value="Chromosome 19"/>
</dbReference>
<dbReference type="Bgee" id="ENSRNOG00000019943">
    <property type="expression patterns" value="Expressed in ovary and 20 other cell types or tissues"/>
</dbReference>
<dbReference type="GO" id="GO:0005886">
    <property type="term" value="C:plasma membrane"/>
    <property type="evidence" value="ECO:0007669"/>
    <property type="project" value="UniProtKB-SubCell"/>
</dbReference>
<dbReference type="GO" id="GO:0034618">
    <property type="term" value="F:arginine binding"/>
    <property type="evidence" value="ECO:0000266"/>
    <property type="project" value="RGD"/>
</dbReference>
<dbReference type="GO" id="GO:0015174">
    <property type="term" value="F:basic amino acid transmembrane transporter activity"/>
    <property type="evidence" value="ECO:0000266"/>
    <property type="project" value="RGD"/>
</dbReference>
<dbReference type="GO" id="GO:0015179">
    <property type="term" value="F:L-amino acid transmembrane transporter activity"/>
    <property type="evidence" value="ECO:0000318"/>
    <property type="project" value="GO_Central"/>
</dbReference>
<dbReference type="GO" id="GO:0061459">
    <property type="term" value="F:L-arginine transmembrane transporter activity"/>
    <property type="evidence" value="ECO:0000266"/>
    <property type="project" value="RGD"/>
</dbReference>
<dbReference type="GO" id="GO:0106439">
    <property type="term" value="F:L-lysine:L-arginine antiporter activity"/>
    <property type="evidence" value="ECO:0000250"/>
    <property type="project" value="UniProtKB"/>
</dbReference>
<dbReference type="GO" id="GO:0003333">
    <property type="term" value="P:amino acid transmembrane transport"/>
    <property type="evidence" value="ECO:0000318"/>
    <property type="project" value="GO_Central"/>
</dbReference>
<dbReference type="GO" id="GO:0031460">
    <property type="term" value="P:glycine betaine transport"/>
    <property type="evidence" value="ECO:0000266"/>
    <property type="project" value="RGD"/>
</dbReference>
<dbReference type="GO" id="GO:1903826">
    <property type="term" value="P:L-arginine transmembrane transport"/>
    <property type="evidence" value="ECO:0000315"/>
    <property type="project" value="UniProtKB"/>
</dbReference>
<dbReference type="GO" id="GO:0015820">
    <property type="term" value="P:L-leucine transport"/>
    <property type="evidence" value="ECO:0000266"/>
    <property type="project" value="RGD"/>
</dbReference>
<dbReference type="GO" id="GO:0015804">
    <property type="term" value="P:neutral amino acid transport"/>
    <property type="evidence" value="ECO:0000266"/>
    <property type="project" value="RGD"/>
</dbReference>
<dbReference type="GO" id="GO:0006809">
    <property type="term" value="P:nitric oxide biosynthetic process"/>
    <property type="evidence" value="ECO:0000315"/>
    <property type="project" value="UniProtKB"/>
</dbReference>
<dbReference type="GO" id="GO:0015822">
    <property type="term" value="P:ornithine transport"/>
    <property type="evidence" value="ECO:0000266"/>
    <property type="project" value="RGD"/>
</dbReference>
<dbReference type="FunFam" id="1.20.1740.10:FF:000003">
    <property type="entry name" value="Y+L amino acid transporter 1 isoform X1"/>
    <property type="match status" value="1"/>
</dbReference>
<dbReference type="Gene3D" id="1.20.1740.10">
    <property type="entry name" value="Amino acid/polyamine transporter I"/>
    <property type="match status" value="1"/>
</dbReference>
<dbReference type="InterPro" id="IPR002293">
    <property type="entry name" value="AA/rel_permease1"/>
</dbReference>
<dbReference type="InterPro" id="IPR050598">
    <property type="entry name" value="AminoAcid_Transporter"/>
</dbReference>
<dbReference type="PANTHER" id="PTHR11785">
    <property type="entry name" value="AMINO ACID TRANSPORTER"/>
    <property type="match status" value="1"/>
</dbReference>
<dbReference type="PANTHER" id="PTHR11785:SF398">
    <property type="entry name" value="Y+L AMINO ACID TRANSPORTER 2"/>
    <property type="match status" value="1"/>
</dbReference>
<dbReference type="Pfam" id="PF13520">
    <property type="entry name" value="AA_permease_2"/>
    <property type="match status" value="1"/>
</dbReference>
<dbReference type="PIRSF" id="PIRSF006060">
    <property type="entry name" value="AA_transporter"/>
    <property type="match status" value="1"/>
</dbReference>
<name>YLAT2_RAT</name>
<protein>
    <recommendedName>
        <fullName evidence="6">Y+L amino acid transporter 2</fullName>
    </recommendedName>
    <alternativeName>
        <fullName>Solute carrier family 7 member 6</fullName>
    </alternativeName>
    <alternativeName>
        <fullName>y(+)L-type amino acid transporter 2</fullName>
        <shortName>Y+LAT2</shortName>
        <shortName>y+LAT-2</shortName>
    </alternativeName>
</protein>
<comment type="function">
    <text evidence="1 2 4 5">Heterodimer with SLC3A2, that functions as an antiporter which operates as an efflux routeby exporting cationic amino acids such as L-arginine from inside the cells in exchange with neutral amino acids like L-leucine, L-glutamine and isoleucine, plus sodium ions and may participate in nitric oxide synthesis (PubMed:22401943, PubMed:26448619). Also exchanges L-arginine with L-lysine in a sodium-independent manner. The transport mechanism is electroneutral and operates with a stoichiometry of 1: 1 (By similarity). Contributes to ammonia-induced increase of L-arginine uptake in cerebral cortical astrocytes leading to ammonia-dependent increase of nitric oxide (NO) production via inducible nitric oxide synthase (iNOS) induction, and protein nitration (PubMed:22401943, PubMed:26448619). May mediate transport of ornithine in retinal pigment epithelial (RPE) cells (By similarity). May also transport glycine betaine in a sodium dependent manner from the cumulus granulosa into the enclosed oocyte (By similarity).</text>
</comment>
<comment type="catalytic activity">
    <reaction evidence="2">
        <text>L-lysine(out) + L-arginine(in) = L-lysine(in) + L-arginine(out)</text>
        <dbReference type="Rhea" id="RHEA:70827"/>
        <dbReference type="ChEBI" id="CHEBI:32551"/>
        <dbReference type="ChEBI" id="CHEBI:32682"/>
    </reaction>
</comment>
<comment type="catalytic activity">
    <reaction evidence="2">
        <text>L-leucine(out) + L-arginine(in) + Na(+)(out) = L-leucine(in) + L-arginine(out) + Na(+)(in)</text>
        <dbReference type="Rhea" id="RHEA:70831"/>
        <dbReference type="ChEBI" id="CHEBI:29101"/>
        <dbReference type="ChEBI" id="CHEBI:32682"/>
        <dbReference type="ChEBI" id="CHEBI:57427"/>
    </reaction>
</comment>
<comment type="catalytic activity">
    <reaction evidence="2">
        <text>L-glutamine(out) + L-arginine(in) + Na(+)(out) = L-glutamine(in) + L-arginine(out) + Na(+)(in)</text>
        <dbReference type="Rhea" id="RHEA:70835"/>
        <dbReference type="ChEBI" id="CHEBI:29101"/>
        <dbReference type="ChEBI" id="CHEBI:32682"/>
        <dbReference type="ChEBI" id="CHEBI:58359"/>
    </reaction>
</comment>
<comment type="catalytic activity">
    <reaction evidence="2">
        <text>L-histidine(out) + L-arginine(in) + Na(+)(out) = L-histidine(in) + L-arginine(out) + Na(+)(in)</text>
        <dbReference type="Rhea" id="RHEA:70839"/>
        <dbReference type="ChEBI" id="CHEBI:29101"/>
        <dbReference type="ChEBI" id="CHEBI:32682"/>
        <dbReference type="ChEBI" id="CHEBI:57595"/>
    </reaction>
</comment>
<comment type="catalytic activity">
    <reaction evidence="2">
        <text>L-cysteine(out) + L-arginine(in) + Na(+)(out) = L-cysteine(in) + L-arginine(out) + Na(+)(in)</text>
        <dbReference type="Rhea" id="RHEA:70847"/>
        <dbReference type="ChEBI" id="CHEBI:29101"/>
        <dbReference type="ChEBI" id="CHEBI:32682"/>
        <dbReference type="ChEBI" id="CHEBI:35235"/>
    </reaction>
</comment>
<comment type="catalytic activity">
    <reaction evidence="2">
        <text>L-arginine(in) + L-methionine(out) + Na(+)(out) = L-arginine(out) + L-methionine(in) + Na(+)(in)</text>
        <dbReference type="Rhea" id="RHEA:70843"/>
        <dbReference type="ChEBI" id="CHEBI:29101"/>
        <dbReference type="ChEBI" id="CHEBI:32682"/>
        <dbReference type="ChEBI" id="CHEBI:57844"/>
    </reaction>
</comment>
<comment type="biophysicochemical properties">
    <kinetics>
        <KM evidence="4">55.82 uM for L-arginine</KM>
        <KM evidence="4">71.06 uM for L-arginine (in astrocytes treated with ammonium chloride)</KM>
        <Vmax evidence="4">1.301 nmol/min/mg enzyme toward L-arginine</Vmax>
        <Vmax evidence="4">1.82 nmol/min/mg enzyme toward L-arginine (in astrocytes treated with ammonium chloride)</Vmax>
    </kinetics>
</comment>
<comment type="subunit">
    <text evidence="2">Disulfide-linked heterodimer with the amino acid transport protein SLC3A2/4F2hc.</text>
</comment>
<comment type="subcellular location">
    <subcellularLocation>
        <location evidence="2">Cell membrane</location>
        <topology evidence="3">Multi-pass membrane protein</topology>
    </subcellularLocation>
</comment>
<comment type="tissue specificity">
    <text evidence="4">Expressed in cerebral cortical astrocytes.</text>
</comment>
<comment type="induction">
    <text evidence="4">Up-regulated by ammonia.</text>
</comment>
<comment type="similarity">
    <text evidence="3">Belongs to the amino acid-polyamine-organocation (APC) superfamily. L-type amino acid transporter (LAT) (TC 2.A.3.8) family.</text>
</comment>
<evidence type="ECO:0000250" key="1">
    <source>
        <dbReference type="UniProtKB" id="Q8BGK6"/>
    </source>
</evidence>
<evidence type="ECO:0000250" key="2">
    <source>
        <dbReference type="UniProtKB" id="Q92536"/>
    </source>
</evidence>
<evidence type="ECO:0000255" key="3"/>
<evidence type="ECO:0000269" key="4">
    <source>
    </source>
</evidence>
<evidence type="ECO:0000269" key="5">
    <source>
    </source>
</evidence>
<evidence type="ECO:0000305" key="6"/>
<evidence type="ECO:0000312" key="7">
    <source>
        <dbReference type="RGD" id="1309193"/>
    </source>
</evidence>
<gene>
    <name evidence="7" type="primary">Slc7a6</name>
</gene>
<accession>D3ZMM8</accession>
<feature type="chain" id="PRO_0000457665" description="Y+L amino acid transporter 2">
    <location>
        <begin position="1"/>
        <end position="515"/>
    </location>
</feature>
<feature type="topological domain" description="Cytoplasmic" evidence="6">
    <location>
        <begin position="1"/>
        <end position="44"/>
    </location>
</feature>
<feature type="transmembrane region" description="Helical" evidence="3">
    <location>
        <begin position="45"/>
        <end position="65"/>
    </location>
</feature>
<feature type="topological domain" description="Extracellular" evidence="6">
    <location>
        <begin position="66"/>
        <end position="78"/>
    </location>
</feature>
<feature type="transmembrane region" description="Helical" evidence="3">
    <location>
        <begin position="79"/>
        <end position="99"/>
    </location>
</feature>
<feature type="topological domain" description="Cytoplasmic" evidence="6">
    <location>
        <begin position="100"/>
        <end position="114"/>
    </location>
</feature>
<feature type="transmembrane region" description="Helical" evidence="3">
    <location>
        <begin position="115"/>
        <end position="135"/>
    </location>
</feature>
<feature type="topological domain" description="Extracellular" evidence="6">
    <location>
        <begin position="136"/>
        <end position="167"/>
    </location>
</feature>
<feature type="transmembrane region" description="Helical" evidence="3">
    <location>
        <begin position="168"/>
        <end position="188"/>
    </location>
</feature>
<feature type="topological domain" description="Cytoplasmic" evidence="6">
    <location>
        <begin position="189"/>
        <end position="194"/>
    </location>
</feature>
<feature type="transmembrane region" description="Helical" evidence="3">
    <location>
        <begin position="195"/>
        <end position="215"/>
    </location>
</feature>
<feature type="topological domain" description="Extracellular" evidence="6">
    <location>
        <begin position="216"/>
        <end position="235"/>
    </location>
</feature>
<feature type="transmembrane region" description="Helical" evidence="3">
    <location>
        <begin position="236"/>
        <end position="256"/>
    </location>
</feature>
<feature type="topological domain" description="Cytoplasmic" evidence="6">
    <location>
        <begin position="257"/>
        <end position="266"/>
    </location>
</feature>
<feature type="transmembrane region" description="Helical" evidence="3">
    <location>
        <begin position="267"/>
        <end position="287"/>
    </location>
</feature>
<feature type="topological domain" description="Extracellular" evidence="6">
    <location>
        <begin position="288"/>
        <end position="311"/>
    </location>
</feature>
<feature type="transmembrane region" description="Helical" evidence="3">
    <location>
        <begin position="312"/>
        <end position="332"/>
    </location>
</feature>
<feature type="topological domain" description="Cytoplasmic" evidence="6">
    <location>
        <begin position="333"/>
        <end position="363"/>
    </location>
</feature>
<feature type="transmembrane region" description="Helical" evidence="3">
    <location>
        <begin position="364"/>
        <end position="384"/>
    </location>
</feature>
<feature type="topological domain" description="Extracellular" evidence="6">
    <location>
        <position position="385"/>
    </location>
</feature>
<feature type="transmembrane region" description="Helical" evidence="3">
    <location>
        <begin position="386"/>
        <end position="406"/>
    </location>
</feature>
<feature type="topological domain" description="Cytoplasmic" evidence="6">
    <location>
        <begin position="407"/>
        <end position="424"/>
    </location>
</feature>
<feature type="transmembrane region" description="Helical" evidence="3">
    <location>
        <begin position="425"/>
        <end position="445"/>
    </location>
</feature>
<feature type="topological domain" description="Extracellular" evidence="6">
    <location>
        <begin position="446"/>
        <end position="451"/>
    </location>
</feature>
<feature type="transmembrane region" description="Helical" evidence="3">
    <location>
        <begin position="452"/>
        <end position="472"/>
    </location>
</feature>
<feature type="topological domain" description="Cytoplasmic" evidence="6">
    <location>
        <begin position="473"/>
        <end position="515"/>
    </location>
</feature>
<sequence length="515" mass="56815">MEARELGSPTPTYHLLPKANQHTVKEDASSPSQGSPETMQLKKEISLLNGVSLVVGNMIGSGIFVSPKGVLKYTASYGLSLVVWAIGGLFSVVGALCYAELGTTITKSGASYAYILEAFGGFIAFIRLWVSLLIVEPTSQAIIAITFANYIIKPSFPTCDPPYVACRLLAAACVCLLTFVNCAYVKWGTRVQDTFTYAKVLALIAIIIMGLVKLCQGHTEHFQDAFKGSSWNVGDLSLALYSALFSYSGWDTLNFVTEEIKNPERNLPLAIGISMPIVTLIYILTNVAYYTVLNIQDVHKSDAVAVTFADQTFGMFSWTIPIAVALSCFGGLNASIFASSRLFFVGSREGHLPNLLSMIHIERFTPVPALLFNCTMTLIYLVVKDVFLLINYFSFSYWFFVGLSVVGQLYLRWKEPDWPRPLKLSLFFPIVFCICSLFLVAVPLFSDTINSLIGIGIALSGVPVYFMGVYLPEARRPLFIRKVLATVTRVTQKLCFCVLTELDVAEEKNVERKTD</sequence>
<keyword id="KW-0029">Amino-acid transport</keyword>
<keyword id="KW-1003">Cell membrane</keyword>
<keyword id="KW-0472">Membrane</keyword>
<keyword id="KW-1185">Reference proteome</keyword>
<keyword id="KW-0812">Transmembrane</keyword>
<keyword id="KW-1133">Transmembrane helix</keyword>
<keyword id="KW-0813">Transport</keyword>